<sequence>MSSKVQQEIADLKKLIRKWDKEYYVDSLPSVEDFVYDKHILRLQELESKYPEYKTLDSPTLKFGSDLLNDFKEVEHSAPILSLDKVYDLDLLKSWIDKIDFNNSFNISVEPKIDGCSIVLYYKDGVLEKALTRGNGKFGNDVTINVRTIRYIPLFLDEKVDLVLRGEVYITKENFLKINKFLEKPYTNSRNLASGILRRVDSREVANFPLNIFIYDFLNAGLEFKTNDLATARLKKLGFKVNPLIRFFDLKNSIGEVLNYIADIIKKRDSFEYEIDGVVLKVSDFALRERLGYTAHHPKWAMAYKFEALSDFSRVNSIVVQVGRSGKITPVANIDKVFVSGAFITSATLHNQDYIRSIGLNVGDVVKVSRRGDVIPAVEMVINKFSTGFFKVPDNCPACKTAVVKEGAHFFCPNNNCPSVAVERIKYFCSKNCMDIEGFSDKIISFLFEKKFIFSEIDLYTFDFYKLLEFKGFKDRKINNLINSIEASKKKPFSKLLLSMGIKDLGENTIMLLFLNNLNSFSKLFKLCQDRYFAFSTLLKIKGIGEKIALNIIEAFNDSVMLNKFKFFENLEFKMEEVVAIDGENKLLAGKKFCITGTFNGYSRSIVIDKLKNKGAIFNTCVTGSLDFLIVGEKAGSKLKKALSLNIKIMSFEDIKSYLD</sequence>
<organism>
    <name type="scientific">Borreliella burgdorferi (strain ZS7)</name>
    <name type="common">Borrelia burgdorferi</name>
    <dbReference type="NCBI Taxonomy" id="445985"/>
    <lineage>
        <taxon>Bacteria</taxon>
        <taxon>Pseudomonadati</taxon>
        <taxon>Spirochaetota</taxon>
        <taxon>Spirochaetia</taxon>
        <taxon>Spirochaetales</taxon>
        <taxon>Borreliaceae</taxon>
        <taxon>Borreliella</taxon>
    </lineage>
</organism>
<evidence type="ECO:0000255" key="1">
    <source>
        <dbReference type="HAMAP-Rule" id="MF_01588"/>
    </source>
</evidence>
<dbReference type="EC" id="6.5.1.2" evidence="1"/>
<dbReference type="EMBL" id="CP001205">
    <property type="protein sequence ID" value="ACK74727.1"/>
    <property type="molecule type" value="Genomic_DNA"/>
</dbReference>
<dbReference type="RefSeq" id="WP_012597352.1">
    <property type="nucleotide sequence ID" value="NC_011728.1"/>
</dbReference>
<dbReference type="SMR" id="B7J2B3"/>
<dbReference type="KEGG" id="bbz:BbuZS7_0562"/>
<dbReference type="HOGENOM" id="CLU_007764_2_1_12"/>
<dbReference type="Proteomes" id="UP000006901">
    <property type="component" value="Chromosome"/>
</dbReference>
<dbReference type="GO" id="GO:0003677">
    <property type="term" value="F:DNA binding"/>
    <property type="evidence" value="ECO:0007669"/>
    <property type="project" value="InterPro"/>
</dbReference>
<dbReference type="GO" id="GO:0003911">
    <property type="term" value="F:DNA ligase (NAD+) activity"/>
    <property type="evidence" value="ECO:0007669"/>
    <property type="project" value="UniProtKB-UniRule"/>
</dbReference>
<dbReference type="GO" id="GO:0046872">
    <property type="term" value="F:metal ion binding"/>
    <property type="evidence" value="ECO:0007669"/>
    <property type="project" value="UniProtKB-KW"/>
</dbReference>
<dbReference type="GO" id="GO:0006281">
    <property type="term" value="P:DNA repair"/>
    <property type="evidence" value="ECO:0007669"/>
    <property type="project" value="UniProtKB-KW"/>
</dbReference>
<dbReference type="GO" id="GO:0006260">
    <property type="term" value="P:DNA replication"/>
    <property type="evidence" value="ECO:0007669"/>
    <property type="project" value="UniProtKB-KW"/>
</dbReference>
<dbReference type="CDD" id="cd17748">
    <property type="entry name" value="BRCT_DNA_ligase_like"/>
    <property type="match status" value="1"/>
</dbReference>
<dbReference type="CDD" id="cd00114">
    <property type="entry name" value="LIGANc"/>
    <property type="match status" value="1"/>
</dbReference>
<dbReference type="Gene3D" id="1.10.150.20">
    <property type="entry name" value="5' to 3' exonuclease, C-terminal subdomain"/>
    <property type="match status" value="2"/>
</dbReference>
<dbReference type="Gene3D" id="3.40.50.10190">
    <property type="entry name" value="BRCT domain"/>
    <property type="match status" value="1"/>
</dbReference>
<dbReference type="Gene3D" id="3.30.470.30">
    <property type="entry name" value="DNA ligase/mRNA capping enzyme"/>
    <property type="match status" value="1"/>
</dbReference>
<dbReference type="Gene3D" id="1.10.287.610">
    <property type="entry name" value="Helix hairpin bin"/>
    <property type="match status" value="1"/>
</dbReference>
<dbReference type="Gene3D" id="2.40.50.140">
    <property type="entry name" value="Nucleic acid-binding proteins"/>
    <property type="match status" value="1"/>
</dbReference>
<dbReference type="HAMAP" id="MF_01588">
    <property type="entry name" value="DNA_ligase_A"/>
    <property type="match status" value="1"/>
</dbReference>
<dbReference type="InterPro" id="IPR001357">
    <property type="entry name" value="BRCT_dom"/>
</dbReference>
<dbReference type="InterPro" id="IPR036420">
    <property type="entry name" value="BRCT_dom_sf"/>
</dbReference>
<dbReference type="InterPro" id="IPR001679">
    <property type="entry name" value="DNA_ligase"/>
</dbReference>
<dbReference type="InterPro" id="IPR013839">
    <property type="entry name" value="DNAligase_adenylation"/>
</dbReference>
<dbReference type="InterPro" id="IPR013840">
    <property type="entry name" value="DNAligase_N"/>
</dbReference>
<dbReference type="InterPro" id="IPR003583">
    <property type="entry name" value="Hlx-hairpin-Hlx_DNA-bd_motif"/>
</dbReference>
<dbReference type="InterPro" id="IPR012340">
    <property type="entry name" value="NA-bd_OB-fold"/>
</dbReference>
<dbReference type="InterPro" id="IPR004150">
    <property type="entry name" value="NAD_DNA_ligase_OB"/>
</dbReference>
<dbReference type="InterPro" id="IPR010994">
    <property type="entry name" value="RuvA_2-like"/>
</dbReference>
<dbReference type="NCBIfam" id="TIGR00575">
    <property type="entry name" value="dnlj"/>
    <property type="match status" value="1"/>
</dbReference>
<dbReference type="NCBIfam" id="NF005932">
    <property type="entry name" value="PRK07956.1"/>
    <property type="match status" value="1"/>
</dbReference>
<dbReference type="NCBIfam" id="NF010930">
    <property type="entry name" value="PRK14350.1"/>
    <property type="match status" value="1"/>
</dbReference>
<dbReference type="Pfam" id="PF00533">
    <property type="entry name" value="BRCT"/>
    <property type="match status" value="1"/>
</dbReference>
<dbReference type="Pfam" id="PF01653">
    <property type="entry name" value="DNA_ligase_aden"/>
    <property type="match status" value="1"/>
</dbReference>
<dbReference type="Pfam" id="PF03120">
    <property type="entry name" value="DNA_ligase_OB"/>
    <property type="match status" value="1"/>
</dbReference>
<dbReference type="PIRSF" id="PIRSF001604">
    <property type="entry name" value="LigA"/>
    <property type="match status" value="1"/>
</dbReference>
<dbReference type="SMART" id="SM00292">
    <property type="entry name" value="BRCT"/>
    <property type="match status" value="1"/>
</dbReference>
<dbReference type="SMART" id="SM00278">
    <property type="entry name" value="HhH1"/>
    <property type="match status" value="3"/>
</dbReference>
<dbReference type="SMART" id="SM00532">
    <property type="entry name" value="LIGANc"/>
    <property type="match status" value="1"/>
</dbReference>
<dbReference type="SUPFAM" id="SSF52113">
    <property type="entry name" value="BRCT domain"/>
    <property type="match status" value="1"/>
</dbReference>
<dbReference type="SUPFAM" id="SSF56091">
    <property type="entry name" value="DNA ligase/mRNA capping enzyme, catalytic domain"/>
    <property type="match status" value="1"/>
</dbReference>
<dbReference type="SUPFAM" id="SSF50249">
    <property type="entry name" value="Nucleic acid-binding proteins"/>
    <property type="match status" value="1"/>
</dbReference>
<dbReference type="SUPFAM" id="SSF47781">
    <property type="entry name" value="RuvA domain 2-like"/>
    <property type="match status" value="1"/>
</dbReference>
<dbReference type="PROSITE" id="PS50172">
    <property type="entry name" value="BRCT"/>
    <property type="match status" value="1"/>
</dbReference>
<feature type="chain" id="PRO_0000380310" description="DNA ligase">
    <location>
        <begin position="1"/>
        <end position="660"/>
    </location>
</feature>
<feature type="domain" description="BRCT" evidence="1">
    <location>
        <begin position="583"/>
        <end position="660"/>
    </location>
</feature>
<feature type="active site" description="N6-AMP-lysine intermediate" evidence="1">
    <location>
        <position position="112"/>
    </location>
</feature>
<feature type="binding site" evidence="1">
    <location>
        <begin position="33"/>
        <end position="37"/>
    </location>
    <ligand>
        <name>NAD(+)</name>
        <dbReference type="ChEBI" id="CHEBI:57540"/>
    </ligand>
</feature>
<feature type="binding site" evidence="1">
    <location>
        <begin position="82"/>
        <end position="83"/>
    </location>
    <ligand>
        <name>NAD(+)</name>
        <dbReference type="ChEBI" id="CHEBI:57540"/>
    </ligand>
</feature>
<feature type="binding site" evidence="1">
    <location>
        <position position="110"/>
    </location>
    <ligand>
        <name>NAD(+)</name>
        <dbReference type="ChEBI" id="CHEBI:57540"/>
    </ligand>
</feature>
<feature type="binding site" evidence="1">
    <location>
        <position position="133"/>
    </location>
    <ligand>
        <name>NAD(+)</name>
        <dbReference type="ChEBI" id="CHEBI:57540"/>
    </ligand>
</feature>
<feature type="binding site" evidence="1">
    <location>
        <position position="167"/>
    </location>
    <ligand>
        <name>NAD(+)</name>
        <dbReference type="ChEBI" id="CHEBI:57540"/>
    </ligand>
</feature>
<feature type="binding site" evidence="1">
    <location>
        <position position="281"/>
    </location>
    <ligand>
        <name>NAD(+)</name>
        <dbReference type="ChEBI" id="CHEBI:57540"/>
    </ligand>
</feature>
<feature type="binding site" evidence="1">
    <location>
        <position position="305"/>
    </location>
    <ligand>
        <name>NAD(+)</name>
        <dbReference type="ChEBI" id="CHEBI:57540"/>
    </ligand>
</feature>
<feature type="binding site" evidence="1">
    <location>
        <position position="396"/>
    </location>
    <ligand>
        <name>Zn(2+)</name>
        <dbReference type="ChEBI" id="CHEBI:29105"/>
    </ligand>
</feature>
<feature type="binding site" evidence="1">
    <location>
        <position position="399"/>
    </location>
    <ligand>
        <name>Zn(2+)</name>
        <dbReference type="ChEBI" id="CHEBI:29105"/>
    </ligand>
</feature>
<feature type="binding site" evidence="1">
    <location>
        <position position="412"/>
    </location>
    <ligand>
        <name>Zn(2+)</name>
        <dbReference type="ChEBI" id="CHEBI:29105"/>
    </ligand>
</feature>
<feature type="binding site" evidence="1">
    <location>
        <position position="417"/>
    </location>
    <ligand>
        <name>Zn(2+)</name>
        <dbReference type="ChEBI" id="CHEBI:29105"/>
    </ligand>
</feature>
<protein>
    <recommendedName>
        <fullName evidence="1">DNA ligase</fullName>
        <ecNumber evidence="1">6.5.1.2</ecNumber>
    </recommendedName>
    <alternativeName>
        <fullName evidence="1">Polydeoxyribonucleotide synthase [NAD(+)]</fullName>
    </alternativeName>
</protein>
<name>DNLJ_BORBZ</name>
<reference key="1">
    <citation type="journal article" date="2011" name="J. Bacteriol.">
        <title>Whole-genome sequences of thirteen isolates of Borrelia burgdorferi.</title>
        <authorList>
            <person name="Schutzer S.E."/>
            <person name="Fraser-Liggett C.M."/>
            <person name="Casjens S.R."/>
            <person name="Qiu W.G."/>
            <person name="Dunn J.J."/>
            <person name="Mongodin E.F."/>
            <person name="Luft B.J."/>
        </authorList>
    </citation>
    <scope>NUCLEOTIDE SEQUENCE [LARGE SCALE GENOMIC DNA]</scope>
    <source>
        <strain>ZS7</strain>
    </source>
</reference>
<accession>B7J2B3</accession>
<proteinExistence type="inferred from homology"/>
<comment type="function">
    <text evidence="1">DNA ligase that catalyzes the formation of phosphodiester linkages between 5'-phosphoryl and 3'-hydroxyl groups in double-stranded DNA using NAD as a coenzyme and as the energy source for the reaction. It is essential for DNA replication and repair of damaged DNA.</text>
</comment>
<comment type="catalytic activity">
    <reaction evidence="1">
        <text>NAD(+) + (deoxyribonucleotide)n-3'-hydroxyl + 5'-phospho-(deoxyribonucleotide)m = (deoxyribonucleotide)n+m + AMP + beta-nicotinamide D-nucleotide.</text>
        <dbReference type="EC" id="6.5.1.2"/>
    </reaction>
</comment>
<comment type="cofactor">
    <cofactor evidence="1">
        <name>Mg(2+)</name>
        <dbReference type="ChEBI" id="CHEBI:18420"/>
    </cofactor>
    <cofactor evidence="1">
        <name>Mn(2+)</name>
        <dbReference type="ChEBI" id="CHEBI:29035"/>
    </cofactor>
</comment>
<comment type="similarity">
    <text evidence="1">Belongs to the NAD-dependent DNA ligase family. LigA subfamily.</text>
</comment>
<gene>
    <name evidence="1" type="primary">ligA</name>
    <name type="ordered locus">BbuZS7_0562</name>
</gene>
<keyword id="KW-0227">DNA damage</keyword>
<keyword id="KW-0234">DNA repair</keyword>
<keyword id="KW-0235">DNA replication</keyword>
<keyword id="KW-0436">Ligase</keyword>
<keyword id="KW-0460">Magnesium</keyword>
<keyword id="KW-0464">Manganese</keyword>
<keyword id="KW-0479">Metal-binding</keyword>
<keyword id="KW-0520">NAD</keyword>
<keyword id="KW-0862">Zinc</keyword>